<gene>
    <name evidence="1" type="primary">rpsN</name>
    <name type="synonym">rpsN2</name>
    <name type="ordered locus">SH1571</name>
</gene>
<proteinExistence type="inferred from homology"/>
<organism>
    <name type="scientific">Staphylococcus haemolyticus (strain JCSC1435)</name>
    <dbReference type="NCBI Taxonomy" id="279808"/>
    <lineage>
        <taxon>Bacteria</taxon>
        <taxon>Bacillati</taxon>
        <taxon>Bacillota</taxon>
        <taxon>Bacilli</taxon>
        <taxon>Bacillales</taxon>
        <taxon>Staphylococcaceae</taxon>
        <taxon>Staphylococcus</taxon>
    </lineage>
</organism>
<comment type="function">
    <text evidence="1">Binds 16S rRNA, required for the assembly of 30S particles and may also be responsible for determining the conformation of the 16S rRNA at the A site.</text>
</comment>
<comment type="subunit">
    <text evidence="1">Part of the 30S ribosomal subunit. Contacts proteins S3 and S10.</text>
</comment>
<comment type="similarity">
    <text evidence="1">Belongs to the universal ribosomal protein uS14 family.</text>
</comment>
<dbReference type="EMBL" id="AP006716">
    <property type="protein sequence ID" value="BAE04880.1"/>
    <property type="molecule type" value="Genomic_DNA"/>
</dbReference>
<dbReference type="RefSeq" id="WP_011275862.1">
    <property type="nucleotide sequence ID" value="NC_007168.1"/>
</dbReference>
<dbReference type="SMR" id="Q4L645"/>
<dbReference type="GeneID" id="93780958"/>
<dbReference type="KEGG" id="sha:SH1571"/>
<dbReference type="eggNOG" id="COG0199">
    <property type="taxonomic scope" value="Bacteria"/>
</dbReference>
<dbReference type="HOGENOM" id="CLU_139869_0_0_9"/>
<dbReference type="OrthoDB" id="9810484at2"/>
<dbReference type="Proteomes" id="UP000000543">
    <property type="component" value="Chromosome"/>
</dbReference>
<dbReference type="GO" id="GO:0005737">
    <property type="term" value="C:cytoplasm"/>
    <property type="evidence" value="ECO:0007669"/>
    <property type="project" value="UniProtKB-ARBA"/>
</dbReference>
<dbReference type="GO" id="GO:0015935">
    <property type="term" value="C:small ribosomal subunit"/>
    <property type="evidence" value="ECO:0007669"/>
    <property type="project" value="TreeGrafter"/>
</dbReference>
<dbReference type="GO" id="GO:0019843">
    <property type="term" value="F:rRNA binding"/>
    <property type="evidence" value="ECO:0007669"/>
    <property type="project" value="UniProtKB-UniRule"/>
</dbReference>
<dbReference type="GO" id="GO:0003735">
    <property type="term" value="F:structural constituent of ribosome"/>
    <property type="evidence" value="ECO:0007669"/>
    <property type="project" value="InterPro"/>
</dbReference>
<dbReference type="GO" id="GO:0006412">
    <property type="term" value="P:translation"/>
    <property type="evidence" value="ECO:0007669"/>
    <property type="project" value="UniProtKB-UniRule"/>
</dbReference>
<dbReference type="FunFam" id="4.10.830.10:FF:000003">
    <property type="entry name" value="30S ribosomal protein S14"/>
    <property type="match status" value="1"/>
</dbReference>
<dbReference type="Gene3D" id="4.10.830.10">
    <property type="entry name" value="30s Ribosomal Protein S14, Chain N"/>
    <property type="match status" value="1"/>
</dbReference>
<dbReference type="HAMAP" id="MF_00537">
    <property type="entry name" value="Ribosomal_uS14_1"/>
    <property type="match status" value="1"/>
</dbReference>
<dbReference type="InterPro" id="IPR001209">
    <property type="entry name" value="Ribosomal_uS14"/>
</dbReference>
<dbReference type="InterPro" id="IPR023036">
    <property type="entry name" value="Ribosomal_uS14_bac/plastid"/>
</dbReference>
<dbReference type="InterPro" id="IPR018271">
    <property type="entry name" value="Ribosomal_uS14_CS"/>
</dbReference>
<dbReference type="InterPro" id="IPR043140">
    <property type="entry name" value="Ribosomal_uS14_sf"/>
</dbReference>
<dbReference type="NCBIfam" id="NF006477">
    <property type="entry name" value="PRK08881.1"/>
    <property type="match status" value="1"/>
</dbReference>
<dbReference type="PANTHER" id="PTHR19836">
    <property type="entry name" value="30S RIBOSOMAL PROTEIN S14"/>
    <property type="match status" value="1"/>
</dbReference>
<dbReference type="PANTHER" id="PTHR19836:SF19">
    <property type="entry name" value="SMALL RIBOSOMAL SUBUNIT PROTEIN US14M"/>
    <property type="match status" value="1"/>
</dbReference>
<dbReference type="Pfam" id="PF00253">
    <property type="entry name" value="Ribosomal_S14"/>
    <property type="match status" value="1"/>
</dbReference>
<dbReference type="SUPFAM" id="SSF57716">
    <property type="entry name" value="Glucocorticoid receptor-like (DNA-binding domain)"/>
    <property type="match status" value="1"/>
</dbReference>
<dbReference type="PROSITE" id="PS00527">
    <property type="entry name" value="RIBOSOMAL_S14"/>
    <property type="match status" value="1"/>
</dbReference>
<feature type="chain" id="PRO_0000269065" description="Small ribosomal subunit protein uS14A">
    <location>
        <begin position="1"/>
        <end position="89"/>
    </location>
</feature>
<protein>
    <recommendedName>
        <fullName evidence="1">Small ribosomal subunit protein uS14A</fullName>
    </recommendedName>
    <alternativeName>
        <fullName evidence="2">30S ribosomal protein S14</fullName>
    </alternativeName>
</protein>
<sequence>MAKKSKIAKEMKREKLVNQYYELRKELKAKGDYEALRKLPRDSSPTRLTRRCKVTGRPRGVLRKFEMSRIAFREHAHKGQIPGVKKSSW</sequence>
<reference key="1">
    <citation type="journal article" date="2005" name="J. Bacteriol.">
        <title>Whole-genome sequencing of Staphylococcus haemolyticus uncovers the extreme plasticity of its genome and the evolution of human-colonizing staphylococcal species.</title>
        <authorList>
            <person name="Takeuchi F."/>
            <person name="Watanabe S."/>
            <person name="Baba T."/>
            <person name="Yuzawa H."/>
            <person name="Ito T."/>
            <person name="Morimoto Y."/>
            <person name="Kuroda M."/>
            <person name="Cui L."/>
            <person name="Takahashi M."/>
            <person name="Ankai A."/>
            <person name="Baba S."/>
            <person name="Fukui S."/>
            <person name="Lee J.C."/>
            <person name="Hiramatsu K."/>
        </authorList>
    </citation>
    <scope>NUCLEOTIDE SEQUENCE [LARGE SCALE GENOMIC DNA]</scope>
    <source>
        <strain>JCSC1435</strain>
    </source>
</reference>
<keyword id="KW-0687">Ribonucleoprotein</keyword>
<keyword id="KW-0689">Ribosomal protein</keyword>
<keyword id="KW-0694">RNA-binding</keyword>
<keyword id="KW-0699">rRNA-binding</keyword>
<accession>Q4L645</accession>
<name>RS14_STAHJ</name>
<evidence type="ECO:0000255" key="1">
    <source>
        <dbReference type="HAMAP-Rule" id="MF_00537"/>
    </source>
</evidence>
<evidence type="ECO:0000305" key="2"/>